<keyword id="KW-1185">Reference proteome</keyword>
<keyword id="KW-0687">Ribonucleoprotein</keyword>
<keyword id="KW-0689">Ribosomal protein</keyword>
<keyword id="KW-0694">RNA-binding</keyword>
<keyword id="KW-0699">rRNA-binding</keyword>
<proteinExistence type="inferred from homology"/>
<sequence length="122" mass="13540">MIQTQSIVDVADNSGARRVMCIKVLGGSKRRYANIGDVIKVSIKEAIPRGKVKKGDVMHAVVVRTRKGVRRNDGSLIRFDNNAVVLLNNQLQLVGTRVFGPVVRELRTDKFMKIISLALEVL</sequence>
<protein>
    <recommendedName>
        <fullName evidence="1">Large ribosomal subunit protein uL14</fullName>
    </recommendedName>
    <alternativeName>
        <fullName evidence="2">50S ribosomal protein L14</fullName>
    </alternativeName>
</protein>
<organism>
    <name type="scientific">Coxiella burnetii (strain RSA 493 / Nine Mile phase I)</name>
    <dbReference type="NCBI Taxonomy" id="227377"/>
    <lineage>
        <taxon>Bacteria</taxon>
        <taxon>Pseudomonadati</taxon>
        <taxon>Pseudomonadota</taxon>
        <taxon>Gammaproteobacteria</taxon>
        <taxon>Legionellales</taxon>
        <taxon>Coxiellaceae</taxon>
        <taxon>Coxiella</taxon>
    </lineage>
</organism>
<accession>Q83ER6</accession>
<name>RL14_COXBU</name>
<dbReference type="EMBL" id="AE016828">
    <property type="protein sequence ID" value="AAO89806.1"/>
    <property type="molecule type" value="Genomic_DNA"/>
</dbReference>
<dbReference type="RefSeq" id="NP_819292.1">
    <property type="nucleotide sequence ID" value="NC_002971.4"/>
</dbReference>
<dbReference type="RefSeq" id="WP_005771526.1">
    <property type="nucleotide sequence ID" value="NZ_CCYB01000060.1"/>
</dbReference>
<dbReference type="SMR" id="Q83ER6"/>
<dbReference type="STRING" id="227377.CBU_0248"/>
<dbReference type="DNASU" id="1208129"/>
<dbReference type="EnsemblBacteria" id="AAO89806">
    <property type="protein sequence ID" value="AAO89806"/>
    <property type="gene ID" value="CBU_0248"/>
</dbReference>
<dbReference type="GeneID" id="1208129"/>
<dbReference type="KEGG" id="cbu:CBU_0248"/>
<dbReference type="PATRIC" id="fig|227377.7.peg.243"/>
<dbReference type="eggNOG" id="COG0093">
    <property type="taxonomic scope" value="Bacteria"/>
</dbReference>
<dbReference type="HOGENOM" id="CLU_095071_2_1_6"/>
<dbReference type="OrthoDB" id="9806379at2"/>
<dbReference type="Proteomes" id="UP000002671">
    <property type="component" value="Chromosome"/>
</dbReference>
<dbReference type="GO" id="GO:0022625">
    <property type="term" value="C:cytosolic large ribosomal subunit"/>
    <property type="evidence" value="ECO:0000318"/>
    <property type="project" value="GO_Central"/>
</dbReference>
<dbReference type="GO" id="GO:0070180">
    <property type="term" value="F:large ribosomal subunit rRNA binding"/>
    <property type="evidence" value="ECO:0000318"/>
    <property type="project" value="GO_Central"/>
</dbReference>
<dbReference type="GO" id="GO:0003735">
    <property type="term" value="F:structural constituent of ribosome"/>
    <property type="evidence" value="ECO:0000318"/>
    <property type="project" value="GO_Central"/>
</dbReference>
<dbReference type="GO" id="GO:0006412">
    <property type="term" value="P:translation"/>
    <property type="evidence" value="ECO:0007669"/>
    <property type="project" value="UniProtKB-UniRule"/>
</dbReference>
<dbReference type="CDD" id="cd00337">
    <property type="entry name" value="Ribosomal_uL14"/>
    <property type="match status" value="1"/>
</dbReference>
<dbReference type="FunFam" id="2.40.150.20:FF:000001">
    <property type="entry name" value="50S ribosomal protein L14"/>
    <property type="match status" value="1"/>
</dbReference>
<dbReference type="Gene3D" id="2.40.150.20">
    <property type="entry name" value="Ribosomal protein L14"/>
    <property type="match status" value="1"/>
</dbReference>
<dbReference type="HAMAP" id="MF_01367">
    <property type="entry name" value="Ribosomal_uL14"/>
    <property type="match status" value="1"/>
</dbReference>
<dbReference type="InterPro" id="IPR000218">
    <property type="entry name" value="Ribosomal_uL14"/>
</dbReference>
<dbReference type="InterPro" id="IPR005745">
    <property type="entry name" value="Ribosomal_uL14_bac-type"/>
</dbReference>
<dbReference type="InterPro" id="IPR019972">
    <property type="entry name" value="Ribosomal_uL14_CS"/>
</dbReference>
<dbReference type="InterPro" id="IPR036853">
    <property type="entry name" value="Ribosomal_uL14_sf"/>
</dbReference>
<dbReference type="NCBIfam" id="TIGR01067">
    <property type="entry name" value="rplN_bact"/>
    <property type="match status" value="1"/>
</dbReference>
<dbReference type="PANTHER" id="PTHR11761">
    <property type="entry name" value="50S/60S RIBOSOMAL PROTEIN L14/L23"/>
    <property type="match status" value="1"/>
</dbReference>
<dbReference type="PANTHER" id="PTHR11761:SF3">
    <property type="entry name" value="LARGE RIBOSOMAL SUBUNIT PROTEIN UL14M"/>
    <property type="match status" value="1"/>
</dbReference>
<dbReference type="Pfam" id="PF00238">
    <property type="entry name" value="Ribosomal_L14"/>
    <property type="match status" value="1"/>
</dbReference>
<dbReference type="SMART" id="SM01374">
    <property type="entry name" value="Ribosomal_L14"/>
    <property type="match status" value="1"/>
</dbReference>
<dbReference type="SUPFAM" id="SSF50193">
    <property type="entry name" value="Ribosomal protein L14"/>
    <property type="match status" value="1"/>
</dbReference>
<dbReference type="PROSITE" id="PS00049">
    <property type="entry name" value="RIBOSOMAL_L14"/>
    <property type="match status" value="1"/>
</dbReference>
<reference key="1">
    <citation type="journal article" date="2003" name="Proc. Natl. Acad. Sci. U.S.A.">
        <title>Complete genome sequence of the Q-fever pathogen, Coxiella burnetii.</title>
        <authorList>
            <person name="Seshadri R."/>
            <person name="Paulsen I.T."/>
            <person name="Eisen J.A."/>
            <person name="Read T.D."/>
            <person name="Nelson K.E."/>
            <person name="Nelson W.C."/>
            <person name="Ward N.L."/>
            <person name="Tettelin H."/>
            <person name="Davidsen T.M."/>
            <person name="Beanan M.J."/>
            <person name="DeBoy R.T."/>
            <person name="Daugherty S.C."/>
            <person name="Brinkac L.M."/>
            <person name="Madupu R."/>
            <person name="Dodson R.J."/>
            <person name="Khouri H.M."/>
            <person name="Lee K.H."/>
            <person name="Carty H.A."/>
            <person name="Scanlan D."/>
            <person name="Heinzen R.A."/>
            <person name="Thompson H.A."/>
            <person name="Samuel J.E."/>
            <person name="Fraser C.M."/>
            <person name="Heidelberg J.F."/>
        </authorList>
    </citation>
    <scope>NUCLEOTIDE SEQUENCE [LARGE SCALE GENOMIC DNA]</scope>
    <source>
        <strain>RSA 493 / Nine Mile phase I</strain>
    </source>
</reference>
<comment type="function">
    <text evidence="1">Binds to 23S rRNA. Forms part of two intersubunit bridges in the 70S ribosome.</text>
</comment>
<comment type="subunit">
    <text evidence="1">Part of the 50S ribosomal subunit. Forms a cluster with proteins L3 and L19. In the 70S ribosome, L14 and L19 interact and together make contacts with the 16S rRNA in bridges B5 and B8.</text>
</comment>
<comment type="similarity">
    <text evidence="1">Belongs to the universal ribosomal protein uL14 family.</text>
</comment>
<feature type="chain" id="PRO_1000055570" description="Large ribosomal subunit protein uL14">
    <location>
        <begin position="1"/>
        <end position="122"/>
    </location>
</feature>
<gene>
    <name evidence="1" type="primary">rplN</name>
    <name type="ordered locus">CBU_0248</name>
</gene>
<evidence type="ECO:0000255" key="1">
    <source>
        <dbReference type="HAMAP-Rule" id="MF_01367"/>
    </source>
</evidence>
<evidence type="ECO:0000305" key="2"/>